<reference key="1">
    <citation type="journal article" date="1997" name="Nature">
        <title>The complete genome sequence of the hyperthermophilic, sulphate-reducing archaeon Archaeoglobus fulgidus.</title>
        <authorList>
            <person name="Klenk H.-P."/>
            <person name="Clayton R.A."/>
            <person name="Tomb J.-F."/>
            <person name="White O."/>
            <person name="Nelson K.E."/>
            <person name="Ketchum K.A."/>
            <person name="Dodson R.J."/>
            <person name="Gwinn M.L."/>
            <person name="Hickey E.K."/>
            <person name="Peterson J.D."/>
            <person name="Richardson D.L."/>
            <person name="Kerlavage A.R."/>
            <person name="Graham D.E."/>
            <person name="Kyrpides N.C."/>
            <person name="Fleischmann R.D."/>
            <person name="Quackenbush J."/>
            <person name="Lee N.H."/>
            <person name="Sutton G.G."/>
            <person name="Gill S.R."/>
            <person name="Kirkness E.F."/>
            <person name="Dougherty B.A."/>
            <person name="McKenney K."/>
            <person name="Adams M.D."/>
            <person name="Loftus B.J."/>
            <person name="Peterson S.N."/>
            <person name="Reich C.I."/>
            <person name="McNeil L.K."/>
            <person name="Badger J.H."/>
            <person name="Glodek A."/>
            <person name="Zhou L."/>
            <person name="Overbeek R."/>
            <person name="Gocayne J.D."/>
            <person name="Weidman J.F."/>
            <person name="McDonald L.A."/>
            <person name="Utterback T.R."/>
            <person name="Cotton M.D."/>
            <person name="Spriggs T."/>
            <person name="Artiach P."/>
            <person name="Kaine B.P."/>
            <person name="Sykes S.M."/>
            <person name="Sadow P.W."/>
            <person name="D'Andrea K.P."/>
            <person name="Bowman C."/>
            <person name="Fujii C."/>
            <person name="Garland S.A."/>
            <person name="Mason T.M."/>
            <person name="Olsen G.J."/>
            <person name="Fraser C.M."/>
            <person name="Smith H.O."/>
            <person name="Woese C.R."/>
            <person name="Venter J.C."/>
        </authorList>
    </citation>
    <scope>NUCLEOTIDE SEQUENCE [LARGE SCALE GENOMIC DNA]</scope>
    <source>
        <strain>ATCC 49558 / DSM 4304 / JCM 9628 / NBRC 100126 / VC-16</strain>
    </source>
</reference>
<reference key="2">
    <citation type="journal article" date="2014" name="Chem. Biol.">
        <title>Identification of CDP-archaeol synthase, a missing link of ether lipid biosynthesis in Archaea.</title>
        <authorList>
            <person name="Jain S."/>
            <person name="Caforio A."/>
            <person name="Fodran P."/>
            <person name="Lolkema J.S."/>
            <person name="Minnaard A.J."/>
            <person name="Driessen A.J."/>
        </authorList>
    </citation>
    <scope>FUNCTION</scope>
    <scope>CATALYTIC ACTIVITY</scope>
    <scope>COFACTOR</scope>
    <scope>BIOPHYSICOCHEMICAL PROPERTIES</scope>
    <scope>PATHWAY</scope>
    <scope>SUBCELLULAR LOCATION</scope>
    <scope>IDENTIFICATION BY MASS SPECTROMETRY</scope>
    <source>
        <strain>ATCC 49558 / DSM 4304 / JCM 9628 / NBRC 100126 / VC-16</strain>
    </source>
</reference>
<proteinExistence type="evidence at protein level"/>
<dbReference type="EC" id="2.7.7.67" evidence="1 2"/>
<dbReference type="EMBL" id="AE000782">
    <property type="protein sequence ID" value="AAB89505.1"/>
    <property type="molecule type" value="Genomic_DNA"/>
</dbReference>
<dbReference type="PIR" id="C69467">
    <property type="entry name" value="C69467"/>
</dbReference>
<dbReference type="RefSeq" id="WP_010879236.1">
    <property type="nucleotide sequence ID" value="NC_000917.1"/>
</dbReference>
<dbReference type="SMR" id="O28534"/>
<dbReference type="STRING" id="224325.AF_1740"/>
<dbReference type="PaxDb" id="224325-AF_1740"/>
<dbReference type="EnsemblBacteria" id="AAB89505">
    <property type="protein sequence ID" value="AAB89505"/>
    <property type="gene ID" value="AF_1740"/>
</dbReference>
<dbReference type="KEGG" id="afu:AF_1740"/>
<dbReference type="eggNOG" id="arCOG04106">
    <property type="taxonomic scope" value="Archaea"/>
</dbReference>
<dbReference type="HOGENOM" id="CLU_105710_0_0_2"/>
<dbReference type="OrthoDB" id="45383at2157"/>
<dbReference type="PhylomeDB" id="O28534"/>
<dbReference type="BioCyc" id="MetaCyc:MONOMER-19241"/>
<dbReference type="BRENDA" id="2.7.7.67">
    <property type="organism ID" value="414"/>
</dbReference>
<dbReference type="UniPathway" id="UPA00940"/>
<dbReference type="Proteomes" id="UP000002199">
    <property type="component" value="Chromosome"/>
</dbReference>
<dbReference type="GO" id="GO:0005886">
    <property type="term" value="C:plasma membrane"/>
    <property type="evidence" value="ECO:0007669"/>
    <property type="project" value="UniProtKB-SubCell"/>
</dbReference>
<dbReference type="GO" id="GO:0043338">
    <property type="term" value="F:CDP-2,3-bis-(O-geranylgeranyl)-sn-glycerol synthase activity"/>
    <property type="evidence" value="ECO:0007669"/>
    <property type="project" value="UniProtKB-EC"/>
</dbReference>
<dbReference type="GO" id="GO:0046474">
    <property type="term" value="P:glycerophospholipid biosynthetic process"/>
    <property type="evidence" value="ECO:0007669"/>
    <property type="project" value="UniProtKB-UniRule"/>
</dbReference>
<dbReference type="HAMAP" id="MF_01117">
    <property type="entry name" value="CDP_archaeol_synth"/>
    <property type="match status" value="1"/>
</dbReference>
<dbReference type="InterPro" id="IPR032690">
    <property type="entry name" value="CarS"/>
</dbReference>
<dbReference type="InterPro" id="IPR002726">
    <property type="entry name" value="CarS_archaea"/>
</dbReference>
<dbReference type="NCBIfam" id="NF003114">
    <property type="entry name" value="PRK04032.1"/>
    <property type="match status" value="1"/>
</dbReference>
<dbReference type="PANTHER" id="PTHR39650">
    <property type="entry name" value="CDP-ARCHAEOL SYNTHASE"/>
    <property type="match status" value="1"/>
</dbReference>
<dbReference type="PANTHER" id="PTHR39650:SF1">
    <property type="entry name" value="CDP-ARCHAEOL SYNTHASE"/>
    <property type="match status" value="1"/>
</dbReference>
<dbReference type="Pfam" id="PF01864">
    <property type="entry name" value="CarS-like"/>
    <property type="match status" value="1"/>
</dbReference>
<keyword id="KW-1003">Cell membrane</keyword>
<keyword id="KW-0444">Lipid biosynthesis</keyword>
<keyword id="KW-0443">Lipid metabolism</keyword>
<keyword id="KW-0460">Magnesium</keyword>
<keyword id="KW-0472">Membrane</keyword>
<keyword id="KW-0594">Phospholipid biosynthesis</keyword>
<keyword id="KW-1208">Phospholipid metabolism</keyword>
<keyword id="KW-1185">Reference proteome</keyword>
<keyword id="KW-0808">Transferase</keyword>
<keyword id="KW-0812">Transmembrane</keyword>
<keyword id="KW-1133">Transmembrane helix</keyword>
<comment type="function">
    <text evidence="2">Catalyzes the formation of CDP-2,3-bis-(O-geranylgeranyl)-sn-glycerol (CDP-archaeol) from 2,3-bis-(O-geranylgeranyl)-sn-glycerol 1-phosphate (DGGGP) and CTP. This reaction is the third ether-bond-formation step in the biosynthesis of archaeal membrane lipids. Can use CTP or dCTP, but not ATP, GTP or TTP.</text>
</comment>
<comment type="catalytic activity">
    <reaction evidence="1 2">
        <text>2,3-bis-O-(geranylgeranyl)-sn-glycerol 1-phosphate + CTP + H(+) = CDP-2,3-bis-O-(geranylgeranyl)-sn-glycerol + diphosphate</text>
        <dbReference type="Rhea" id="RHEA:25690"/>
        <dbReference type="ChEBI" id="CHEBI:15378"/>
        <dbReference type="ChEBI" id="CHEBI:33019"/>
        <dbReference type="ChEBI" id="CHEBI:37563"/>
        <dbReference type="ChEBI" id="CHEBI:58837"/>
        <dbReference type="ChEBI" id="CHEBI:58838"/>
        <dbReference type="EC" id="2.7.7.67"/>
    </reaction>
</comment>
<comment type="cofactor">
    <cofactor evidence="1 2">
        <name>Mg(2+)</name>
        <dbReference type="ChEBI" id="CHEBI:18420"/>
    </cofactor>
</comment>
<comment type="biophysicochemical properties">
    <kinetics>
        <KM evidence="2">0.12 mM for DGGGP</KM>
        <text evidence="2">kcat is 0.55 sec(-1).</text>
    </kinetics>
</comment>
<comment type="pathway">
    <text evidence="1 2">Membrane lipid metabolism; glycerophospholipid metabolism.</text>
</comment>
<comment type="subcellular location">
    <subcellularLocation>
        <location evidence="1 2">Cell membrane</location>
        <topology evidence="1">Multi-pass membrane protein</topology>
    </subcellularLocation>
</comment>
<comment type="similarity">
    <text evidence="1 4">Belongs to the CDP-archaeol synthase family.</text>
</comment>
<name>CDPAS_ARCFU</name>
<evidence type="ECO:0000255" key="1">
    <source>
        <dbReference type="HAMAP-Rule" id="MF_01117"/>
    </source>
</evidence>
<evidence type="ECO:0000269" key="2">
    <source>
    </source>
</evidence>
<evidence type="ECO:0000303" key="3">
    <source>
    </source>
</evidence>
<evidence type="ECO:0000305" key="4"/>
<feature type="chain" id="PRO_0000094167" description="CDP-archaeol synthase">
    <location>
        <begin position="1"/>
        <end position="179"/>
    </location>
</feature>
<feature type="transmembrane region" description="Helical" evidence="1">
    <location>
        <begin position="53"/>
        <end position="73"/>
    </location>
</feature>
<feature type="transmembrane region" description="Helical" evidence="1">
    <location>
        <begin position="88"/>
        <end position="108"/>
    </location>
</feature>
<feature type="transmembrane region" description="Helical" evidence="1">
    <location>
        <begin position="120"/>
        <end position="140"/>
    </location>
</feature>
<feature type="transmembrane region" description="Helical" evidence="1">
    <location>
        <begin position="145"/>
        <end position="165"/>
    </location>
</feature>
<organism>
    <name type="scientific">Archaeoglobus fulgidus (strain ATCC 49558 / DSM 4304 / JCM 9628 / NBRC 100126 / VC-16)</name>
    <dbReference type="NCBI Taxonomy" id="224325"/>
    <lineage>
        <taxon>Archaea</taxon>
        <taxon>Methanobacteriati</taxon>
        <taxon>Methanobacteriota</taxon>
        <taxon>Archaeoglobi</taxon>
        <taxon>Archaeoglobales</taxon>
        <taxon>Archaeoglobaceae</taxon>
        <taxon>Archaeoglobus</taxon>
    </lineage>
</organism>
<sequence length="179" mass="19884">MLDLILKTIWLLLPCYTPNNFAVLVGGGTPIDFGKTFVDGKRILGDGKTWRGFVGGVAGGVLTANLQYAIEKLSGLAIYSSLPFNEFFTLTFLLAFGAMFGDLCGSFIKRRFGYERGSRFLIVDQLMFLLVALLIASLYPPFWKLFTAEIIALAVIITPALHMGINYIAYRLNLKEVPW</sequence>
<accession>O28534</accession>
<protein>
    <recommendedName>
        <fullName evidence="1 3">CDP-archaeol synthase</fullName>
        <ecNumber evidence="1 2">2.7.7.67</ecNumber>
    </recommendedName>
    <alternativeName>
        <fullName evidence="1 4">CDP-2,3-bis-(O-geranylgeranyl)-sn-glycerol synthase</fullName>
    </alternativeName>
</protein>
<gene>
    <name evidence="1 3" type="primary">carS</name>
    <name type="ordered locus">AF_1740</name>
</gene>